<proteinExistence type="evidence at protein level"/>
<dbReference type="EC" id="2.5.1.87" evidence="3"/>
<dbReference type="EMBL" id="CU329671">
    <property type="protein sequence ID" value="CAB39848.1"/>
    <property type="molecule type" value="Genomic_DNA"/>
</dbReference>
<dbReference type="PIR" id="T40097">
    <property type="entry name" value="T40097"/>
</dbReference>
<dbReference type="RefSeq" id="NP_596215.1">
    <property type="nucleotide sequence ID" value="NM_001022134.2"/>
</dbReference>
<dbReference type="SMR" id="Q9Y7K8"/>
<dbReference type="BioGRID" id="276927">
    <property type="interactions" value="1"/>
</dbReference>
<dbReference type="FunCoup" id="Q9Y7K8">
    <property type="interactions" value="282"/>
</dbReference>
<dbReference type="STRING" id="284812.Q9Y7K8"/>
<dbReference type="iPTMnet" id="Q9Y7K8"/>
<dbReference type="PaxDb" id="4896-SPBC2A9.06c.1"/>
<dbReference type="EnsemblFungi" id="SPBC2A9.06c.1">
    <property type="protein sequence ID" value="SPBC2A9.06c.1:pep"/>
    <property type="gene ID" value="SPBC2A9.06c"/>
</dbReference>
<dbReference type="GeneID" id="2540399"/>
<dbReference type="KEGG" id="spo:2540399"/>
<dbReference type="PomBase" id="SPBC2A9.06c">
    <property type="gene designation" value="nus1"/>
</dbReference>
<dbReference type="VEuPathDB" id="FungiDB:SPBC2A9.06c"/>
<dbReference type="eggNOG" id="KOG2818">
    <property type="taxonomic scope" value="Eukaryota"/>
</dbReference>
<dbReference type="HOGENOM" id="CLU_051870_1_0_1"/>
<dbReference type="InParanoid" id="Q9Y7K8"/>
<dbReference type="OMA" id="IYSHLPF"/>
<dbReference type="PhylomeDB" id="Q9Y7K8"/>
<dbReference type="BRENDA" id="2.5.1.87">
    <property type="organism ID" value="5613"/>
</dbReference>
<dbReference type="Reactome" id="R-SPO-446199">
    <property type="pathway name" value="Synthesis of Dolichyl-phosphate"/>
</dbReference>
<dbReference type="UniPathway" id="UPA00378"/>
<dbReference type="PRO" id="PR:Q9Y7K8"/>
<dbReference type="Proteomes" id="UP000002485">
    <property type="component" value="Chromosome II"/>
</dbReference>
<dbReference type="GO" id="GO:1904423">
    <property type="term" value="C:dehydrodolichyl diphosphate synthase complex"/>
    <property type="evidence" value="ECO:0000318"/>
    <property type="project" value="GO_Central"/>
</dbReference>
<dbReference type="GO" id="GO:0005783">
    <property type="term" value="C:endoplasmic reticulum"/>
    <property type="evidence" value="ECO:0007005"/>
    <property type="project" value="PomBase"/>
</dbReference>
<dbReference type="GO" id="GO:0005789">
    <property type="term" value="C:endoplasmic reticulum membrane"/>
    <property type="evidence" value="ECO:0000318"/>
    <property type="project" value="GO_Central"/>
</dbReference>
<dbReference type="GO" id="GO:0045547">
    <property type="term" value="F:ditrans,polycis-polyprenyl diphosphate synthase [(2E,6E)-farnesyl diphosphate specific] activity"/>
    <property type="evidence" value="ECO:0007669"/>
    <property type="project" value="UniProtKB-EC"/>
</dbReference>
<dbReference type="GO" id="GO:0019408">
    <property type="term" value="P:dolichol biosynthetic process"/>
    <property type="evidence" value="ECO:0000314"/>
    <property type="project" value="PomBase"/>
</dbReference>
<dbReference type="GO" id="GO:0006486">
    <property type="term" value="P:protein glycosylation"/>
    <property type="evidence" value="ECO:0000318"/>
    <property type="project" value="GO_Central"/>
</dbReference>
<dbReference type="Gene3D" id="3.40.1180.10">
    <property type="entry name" value="Decaprenyl diphosphate synthase-like"/>
    <property type="match status" value="1"/>
</dbReference>
<dbReference type="InterPro" id="IPR038887">
    <property type="entry name" value="Nus1/NgBR"/>
</dbReference>
<dbReference type="InterPro" id="IPR036424">
    <property type="entry name" value="UPP_synth-like_sf"/>
</dbReference>
<dbReference type="PANTHER" id="PTHR21528">
    <property type="entry name" value="DEHYDRODOLICHYL DIPHOSPHATE SYNTHASE COMPLEX SUBUNIT NUS1"/>
    <property type="match status" value="1"/>
</dbReference>
<dbReference type="PANTHER" id="PTHR21528:SF0">
    <property type="entry name" value="DEHYDRODOLICHYL DIPHOSPHATE SYNTHASE COMPLEX SUBUNIT NUS1"/>
    <property type="match status" value="1"/>
</dbReference>
<dbReference type="SUPFAM" id="SSF64005">
    <property type="entry name" value="Undecaprenyl diphosphate synthase"/>
    <property type="match status" value="1"/>
</dbReference>
<organism>
    <name type="scientific">Schizosaccharomyces pombe (strain 972 / ATCC 24843)</name>
    <name type="common">Fission yeast</name>
    <dbReference type="NCBI Taxonomy" id="284812"/>
    <lineage>
        <taxon>Eukaryota</taxon>
        <taxon>Fungi</taxon>
        <taxon>Dikarya</taxon>
        <taxon>Ascomycota</taxon>
        <taxon>Taphrinomycotina</taxon>
        <taxon>Schizosaccharomycetes</taxon>
        <taxon>Schizosaccharomycetales</taxon>
        <taxon>Schizosaccharomycetaceae</taxon>
        <taxon>Schizosaccharomyces</taxon>
    </lineage>
</organism>
<evidence type="ECO:0000250" key="1">
    <source>
        <dbReference type="UniProtKB" id="Q96E22"/>
    </source>
</evidence>
<evidence type="ECO:0000255" key="2"/>
<evidence type="ECO:0000269" key="3">
    <source>
    </source>
</evidence>
<evidence type="ECO:0000303" key="4">
    <source>
    </source>
</evidence>
<evidence type="ECO:0000305" key="5"/>
<comment type="function">
    <text evidence="3">With SPAC4D7.04c, forms the dehydrodolichyl diphosphate synthase (DDS) complex, an essential component of the dolichol monophosphate (Dol-P) biosynthetic machinery. Adds multiple copies of isopentenyl pyrophosphate (IPP) to farnesyl pyrophosphate (FPP) to produce dehydrodolichyl diphosphate (Dedol-PP), a precursor of dolichol which is utilized as a sugar carrier in protein glycosylation in the endoplasmic reticulum (ER).</text>
</comment>
<comment type="catalytic activity">
    <reaction evidence="3">
        <text>n isopentenyl diphosphate + (2E,6E)-farnesyl diphosphate = a di-trans,poly-cis-polyprenyl diphosphate + n diphosphate</text>
        <dbReference type="Rhea" id="RHEA:53008"/>
        <dbReference type="Rhea" id="RHEA-COMP:19494"/>
        <dbReference type="ChEBI" id="CHEBI:33019"/>
        <dbReference type="ChEBI" id="CHEBI:128769"/>
        <dbReference type="ChEBI" id="CHEBI:136960"/>
        <dbReference type="ChEBI" id="CHEBI:175763"/>
        <dbReference type="EC" id="2.5.1.87"/>
    </reaction>
</comment>
<comment type="cofactor">
    <cofactor evidence="1">
        <name>Mg(2+)</name>
        <dbReference type="ChEBI" id="CHEBI:18420"/>
    </cofactor>
</comment>
<comment type="pathway">
    <text evidence="5">Protein modification; protein glycosylation.</text>
</comment>
<comment type="subunit">
    <text evidence="4">Forms an active dehydrodolichyl diphosphate synthase complex with SPAC4D7.04c.</text>
</comment>
<comment type="subcellular location">
    <subcellularLocation>
        <location evidence="5">Endoplasmic reticulum membrane</location>
        <topology evidence="5">Single-pass membrane protein</topology>
    </subcellularLocation>
</comment>
<comment type="similarity">
    <text evidence="5">Belongs to the UPP synthase family.</text>
</comment>
<sequence>MYDDIFFYLALWVIQSVYGAWDWAKNWVFWTCSYLLNFLYHHHCSRDLIRRDTKKLKKKPKHIAVIIECVEDGGIEGLIHDACELSAWCVCSNIRELTIYERKGFLKQSPEAVEKAIYSHLPFYLGGDKCTVHVTNPCSPDEKNQNDCVDLKVHLIAKEDGRDAIIDLTRGLADLCTKKVISSTQVTLELIDKELKESVIPEPDLLIIFAPLLKLQGFPPWQLRLCEIFHDPILYTTNYLTFFKALVHYSNAEMRLGH</sequence>
<feature type="chain" id="PRO_0000353827" description="Dehydrodolichyl diphosphate synthase complex subunit nus1">
    <location>
        <begin position="1"/>
        <end position="258"/>
    </location>
</feature>
<feature type="transmembrane region" description="Helical" evidence="2">
    <location>
        <begin position="5"/>
        <end position="21"/>
    </location>
</feature>
<feature type="mutagenesis site" description="Loss of function.">
    <original>R</original>
    <variation>H</variation>
    <location>
        <position position="255"/>
    </location>
</feature>
<gene>
    <name type="primary">nus1</name>
    <name type="ORF">SPBC2A9.06c</name>
</gene>
<accession>Q9Y7K8</accession>
<reference key="1">
    <citation type="journal article" date="2002" name="Nature">
        <title>The genome sequence of Schizosaccharomyces pombe.</title>
        <authorList>
            <person name="Wood V."/>
            <person name="Gwilliam R."/>
            <person name="Rajandream M.A."/>
            <person name="Lyne M.H."/>
            <person name="Lyne R."/>
            <person name="Stewart A."/>
            <person name="Sgouros J.G."/>
            <person name="Peat N."/>
            <person name="Hayles J."/>
            <person name="Baker S.G."/>
            <person name="Basham D."/>
            <person name="Bowman S."/>
            <person name="Brooks K."/>
            <person name="Brown D."/>
            <person name="Brown S."/>
            <person name="Chillingworth T."/>
            <person name="Churcher C.M."/>
            <person name="Collins M."/>
            <person name="Connor R."/>
            <person name="Cronin A."/>
            <person name="Davis P."/>
            <person name="Feltwell T."/>
            <person name="Fraser A."/>
            <person name="Gentles S."/>
            <person name="Goble A."/>
            <person name="Hamlin N."/>
            <person name="Harris D.E."/>
            <person name="Hidalgo J."/>
            <person name="Hodgson G."/>
            <person name="Holroyd S."/>
            <person name="Hornsby T."/>
            <person name="Howarth S."/>
            <person name="Huckle E.J."/>
            <person name="Hunt S."/>
            <person name="Jagels K."/>
            <person name="James K.D."/>
            <person name="Jones L."/>
            <person name="Jones M."/>
            <person name="Leather S."/>
            <person name="McDonald S."/>
            <person name="McLean J."/>
            <person name="Mooney P."/>
            <person name="Moule S."/>
            <person name="Mungall K.L."/>
            <person name="Murphy L.D."/>
            <person name="Niblett D."/>
            <person name="Odell C."/>
            <person name="Oliver K."/>
            <person name="O'Neil S."/>
            <person name="Pearson D."/>
            <person name="Quail M.A."/>
            <person name="Rabbinowitsch E."/>
            <person name="Rutherford K.M."/>
            <person name="Rutter S."/>
            <person name="Saunders D."/>
            <person name="Seeger K."/>
            <person name="Sharp S."/>
            <person name="Skelton J."/>
            <person name="Simmonds M.N."/>
            <person name="Squares R."/>
            <person name="Squares S."/>
            <person name="Stevens K."/>
            <person name="Taylor K."/>
            <person name="Taylor R.G."/>
            <person name="Tivey A."/>
            <person name="Walsh S.V."/>
            <person name="Warren T."/>
            <person name="Whitehead S."/>
            <person name="Woodward J.R."/>
            <person name="Volckaert G."/>
            <person name="Aert R."/>
            <person name="Robben J."/>
            <person name="Grymonprez B."/>
            <person name="Weltjens I."/>
            <person name="Vanstreels E."/>
            <person name="Rieger M."/>
            <person name="Schaefer M."/>
            <person name="Mueller-Auer S."/>
            <person name="Gabel C."/>
            <person name="Fuchs M."/>
            <person name="Duesterhoeft A."/>
            <person name="Fritzc C."/>
            <person name="Holzer E."/>
            <person name="Moestl D."/>
            <person name="Hilbert H."/>
            <person name="Borzym K."/>
            <person name="Langer I."/>
            <person name="Beck A."/>
            <person name="Lehrach H."/>
            <person name="Reinhardt R."/>
            <person name="Pohl T.M."/>
            <person name="Eger P."/>
            <person name="Zimmermann W."/>
            <person name="Wedler H."/>
            <person name="Wambutt R."/>
            <person name="Purnelle B."/>
            <person name="Goffeau A."/>
            <person name="Cadieu E."/>
            <person name="Dreano S."/>
            <person name="Gloux S."/>
            <person name="Lelaure V."/>
            <person name="Mottier S."/>
            <person name="Galibert F."/>
            <person name="Aves S.J."/>
            <person name="Xiang Z."/>
            <person name="Hunt C."/>
            <person name="Moore K."/>
            <person name="Hurst S.M."/>
            <person name="Lucas M."/>
            <person name="Rochet M."/>
            <person name="Gaillardin C."/>
            <person name="Tallada V.A."/>
            <person name="Garzon A."/>
            <person name="Thode G."/>
            <person name="Daga R.R."/>
            <person name="Cruzado L."/>
            <person name="Jimenez J."/>
            <person name="Sanchez M."/>
            <person name="del Rey F."/>
            <person name="Benito J."/>
            <person name="Dominguez A."/>
            <person name="Revuelta J.L."/>
            <person name="Moreno S."/>
            <person name="Armstrong J."/>
            <person name="Forsburg S.L."/>
            <person name="Cerutti L."/>
            <person name="Lowe T."/>
            <person name="McCombie W.R."/>
            <person name="Paulsen I."/>
            <person name="Potashkin J."/>
            <person name="Shpakovski G.V."/>
            <person name="Ussery D."/>
            <person name="Barrell B.G."/>
            <person name="Nurse P."/>
        </authorList>
    </citation>
    <scope>NUCLEOTIDE SEQUENCE [LARGE SCALE GENOMIC DNA]</scope>
    <source>
        <strain>972 / ATCC 24843</strain>
    </source>
</reference>
<reference key="2">
    <citation type="journal article" date="2014" name="Cell Metab.">
        <title>Mutation of Nogo-B receptor, a subunit of cis-prenyltransferase, causes a congenital disorder of glycosylation.</title>
        <authorList>
            <person name="Park E.J."/>
            <person name="Grabinska K.A."/>
            <person name="Guan Z."/>
            <person name="Stranecky V."/>
            <person name="Hartmannova H."/>
            <person name="Hodanova K."/>
            <person name="Baresova V."/>
            <person name="Sovova J."/>
            <person name="Jozsef L."/>
            <person name="Ondruskova N."/>
            <person name="Hansikova H."/>
            <person name="Honzik T."/>
            <person name="Zeman J."/>
            <person name="Hulkova H."/>
            <person name="Wen R."/>
            <person name="Kmoch S."/>
            <person name="Sessa W.C."/>
        </authorList>
    </citation>
    <scope>CATALYTIC ACTIVITY</scope>
    <scope>FUNCTION</scope>
    <scope>SUBUNIT</scope>
    <scope>MUTAGENESIS OF ARG-255</scope>
</reference>
<name>UPPS_SCHPO</name>
<protein>
    <recommendedName>
        <fullName evidence="5">Dehydrodolichyl diphosphate synthase complex subunit nus1</fullName>
        <ecNumber evidence="3">2.5.1.87</ecNumber>
    </recommendedName>
</protein>
<keyword id="KW-0256">Endoplasmic reticulum</keyword>
<keyword id="KW-0460">Magnesium</keyword>
<keyword id="KW-0472">Membrane</keyword>
<keyword id="KW-1185">Reference proteome</keyword>
<keyword id="KW-0808">Transferase</keyword>
<keyword id="KW-0812">Transmembrane</keyword>
<keyword id="KW-1133">Transmembrane helix</keyword>